<reference key="1">
    <citation type="journal article" date="2004" name="Nat. Biotechnol.">
        <title>Complete genome sequence of the metabolically versatile photosynthetic bacterium Rhodopseudomonas palustris.</title>
        <authorList>
            <person name="Larimer F.W."/>
            <person name="Chain P."/>
            <person name="Hauser L."/>
            <person name="Lamerdin J.E."/>
            <person name="Malfatti S."/>
            <person name="Do L."/>
            <person name="Land M.L."/>
            <person name="Pelletier D.A."/>
            <person name="Beatty J.T."/>
            <person name="Lang A.S."/>
            <person name="Tabita F.R."/>
            <person name="Gibson J.L."/>
            <person name="Hanson T.E."/>
            <person name="Bobst C."/>
            <person name="Torres y Torres J.L."/>
            <person name="Peres C."/>
            <person name="Harrison F.H."/>
            <person name="Gibson J."/>
            <person name="Harwood C.S."/>
        </authorList>
    </citation>
    <scope>NUCLEOTIDE SEQUENCE [LARGE SCALE GENOMIC DNA]</scope>
    <source>
        <strain>ATCC BAA-98 / CGA009</strain>
    </source>
</reference>
<reference key="2">
    <citation type="journal article" date="2004" name="J. Proteome Res.">
        <title>Characterization of the 70S ribosome from Rhodopseudomonas palustris using an integrated 'top-down' and 'bottom-up' mass spectrometric approach.</title>
        <authorList>
            <person name="Strader M.B."/>
            <person name="VerBerkmoes N.C."/>
            <person name="Tabb D.L."/>
            <person name="Connelly H.M."/>
            <person name="Barton J.W."/>
            <person name="Bruce B.D."/>
            <person name="Pelletier D.A."/>
            <person name="Davison B.H."/>
            <person name="Hettich R.L."/>
            <person name="Larimer F.W."/>
            <person name="Hurst G.B."/>
        </authorList>
    </citation>
    <scope>MASS SPECTROMETRY</scope>
    <scope>POST-TRANSLATIONAL MODIFICATIONS</scope>
    <source>
        <strain>ATCC BAA-98 / CGA009</strain>
    </source>
</reference>
<protein>
    <recommendedName>
        <fullName evidence="1">Small ribosomal subunit protein uS8</fullName>
    </recommendedName>
    <alternativeName>
        <fullName evidence="3">30S ribosomal protein S8</fullName>
    </alternativeName>
    <alternativeName>
        <fullName>RRP-S8</fullName>
    </alternativeName>
</protein>
<name>RS8_RHOPA</name>
<accession>Q6N4U7</accession>
<dbReference type="EMBL" id="BX572603">
    <property type="protein sequence ID" value="CAE28677.1"/>
    <property type="molecule type" value="Genomic_DNA"/>
</dbReference>
<dbReference type="RefSeq" id="WP_011158781.1">
    <property type="nucleotide sequence ID" value="NZ_CP116810.1"/>
</dbReference>
<dbReference type="SMR" id="Q6N4U7"/>
<dbReference type="IntAct" id="Q6N4U7">
    <property type="interactions" value="1"/>
</dbReference>
<dbReference type="STRING" id="258594.RPA3236"/>
<dbReference type="GeneID" id="66894322"/>
<dbReference type="eggNOG" id="COG0096">
    <property type="taxonomic scope" value="Bacteria"/>
</dbReference>
<dbReference type="HOGENOM" id="CLU_098428_0_0_5"/>
<dbReference type="PhylomeDB" id="Q6N4U7"/>
<dbReference type="GO" id="GO:1990904">
    <property type="term" value="C:ribonucleoprotein complex"/>
    <property type="evidence" value="ECO:0007669"/>
    <property type="project" value="UniProtKB-KW"/>
</dbReference>
<dbReference type="GO" id="GO:0005840">
    <property type="term" value="C:ribosome"/>
    <property type="evidence" value="ECO:0007669"/>
    <property type="project" value="UniProtKB-KW"/>
</dbReference>
<dbReference type="GO" id="GO:0019843">
    <property type="term" value="F:rRNA binding"/>
    <property type="evidence" value="ECO:0007669"/>
    <property type="project" value="UniProtKB-UniRule"/>
</dbReference>
<dbReference type="GO" id="GO:0003735">
    <property type="term" value="F:structural constituent of ribosome"/>
    <property type="evidence" value="ECO:0007669"/>
    <property type="project" value="InterPro"/>
</dbReference>
<dbReference type="GO" id="GO:0006412">
    <property type="term" value="P:translation"/>
    <property type="evidence" value="ECO:0007669"/>
    <property type="project" value="UniProtKB-UniRule"/>
</dbReference>
<dbReference type="FunFam" id="3.30.1370.30:FF:000002">
    <property type="entry name" value="30S ribosomal protein S8"/>
    <property type="match status" value="1"/>
</dbReference>
<dbReference type="FunFam" id="3.30.1490.10:FF:000001">
    <property type="entry name" value="30S ribosomal protein S8"/>
    <property type="match status" value="1"/>
</dbReference>
<dbReference type="Gene3D" id="3.30.1370.30">
    <property type="match status" value="1"/>
</dbReference>
<dbReference type="Gene3D" id="3.30.1490.10">
    <property type="match status" value="1"/>
</dbReference>
<dbReference type="HAMAP" id="MF_01302_B">
    <property type="entry name" value="Ribosomal_uS8_B"/>
    <property type="match status" value="1"/>
</dbReference>
<dbReference type="InterPro" id="IPR000630">
    <property type="entry name" value="Ribosomal_uS8"/>
</dbReference>
<dbReference type="InterPro" id="IPR047863">
    <property type="entry name" value="Ribosomal_uS8_CS"/>
</dbReference>
<dbReference type="InterPro" id="IPR035987">
    <property type="entry name" value="Ribosomal_uS8_sf"/>
</dbReference>
<dbReference type="NCBIfam" id="NF001109">
    <property type="entry name" value="PRK00136.1"/>
    <property type="match status" value="1"/>
</dbReference>
<dbReference type="PANTHER" id="PTHR11758">
    <property type="entry name" value="40S RIBOSOMAL PROTEIN S15A"/>
    <property type="match status" value="1"/>
</dbReference>
<dbReference type="Pfam" id="PF00410">
    <property type="entry name" value="Ribosomal_S8"/>
    <property type="match status" value="1"/>
</dbReference>
<dbReference type="SUPFAM" id="SSF56047">
    <property type="entry name" value="Ribosomal protein S8"/>
    <property type="match status" value="1"/>
</dbReference>
<dbReference type="PROSITE" id="PS00053">
    <property type="entry name" value="RIBOSOMAL_S8"/>
    <property type="match status" value="1"/>
</dbReference>
<organism>
    <name type="scientific">Rhodopseudomonas palustris (strain ATCC BAA-98 / CGA009)</name>
    <dbReference type="NCBI Taxonomy" id="258594"/>
    <lineage>
        <taxon>Bacteria</taxon>
        <taxon>Pseudomonadati</taxon>
        <taxon>Pseudomonadota</taxon>
        <taxon>Alphaproteobacteria</taxon>
        <taxon>Hyphomicrobiales</taxon>
        <taxon>Nitrobacteraceae</taxon>
        <taxon>Rhodopseudomonas</taxon>
    </lineage>
</organism>
<feature type="initiator methionine" description="Removed">
    <location>
        <position position="1"/>
    </location>
</feature>
<feature type="chain" id="PRO_0000126473" description="Small ribosomal subunit protein uS8">
    <location>
        <begin position="2"/>
        <end position="132"/>
    </location>
</feature>
<sequence>MSTHDPISDLITRIRNAQMRSKSKVSTPGSKMRANVLDVLKAEGYIRGYATVEHPSGRSELEIELKYFDGEPVIREIERVSRPGRRVYASVKNLPRVNNGLGISVLSTPKGIMADHDARDANVGGEVLFTVF</sequence>
<proteinExistence type="evidence at protein level"/>
<comment type="function">
    <text evidence="1">One of the primary rRNA binding proteins, it binds directly to 16S rRNA central domain where it helps coordinate assembly of the platform of the 30S subunit.</text>
</comment>
<comment type="subunit">
    <text evidence="1">Part of the 30S ribosomal subunit. Contacts proteins S5 and S12.</text>
</comment>
<comment type="PTM">
    <text>A modified and unmodified form exist; the nature of the modification(s) is unknown.</text>
</comment>
<comment type="mass spectrometry"/>
<comment type="mass spectrometry"/>
<comment type="similarity">
    <text evidence="1">Belongs to the universal ribosomal protein uS8 family.</text>
</comment>
<gene>
    <name evidence="1" type="primary">rpsH</name>
    <name type="ordered locus">RPA3236</name>
</gene>
<evidence type="ECO:0000255" key="1">
    <source>
        <dbReference type="HAMAP-Rule" id="MF_01302"/>
    </source>
</evidence>
<evidence type="ECO:0000269" key="2">
    <source>
    </source>
</evidence>
<evidence type="ECO:0000305" key="3"/>
<keyword id="KW-0687">Ribonucleoprotein</keyword>
<keyword id="KW-0689">Ribosomal protein</keyword>
<keyword id="KW-0694">RNA-binding</keyword>
<keyword id="KW-0699">rRNA-binding</keyword>